<evidence type="ECO:0000255" key="1">
    <source>
        <dbReference type="HAMAP-Rule" id="MF_01595"/>
    </source>
</evidence>
<evidence type="ECO:0000256" key="2">
    <source>
        <dbReference type="SAM" id="MobiDB-lite"/>
    </source>
</evidence>
<proteinExistence type="inferred from homology"/>
<dbReference type="EC" id="2.7.7.8" evidence="1"/>
<dbReference type="EMBL" id="CP000425">
    <property type="protein sequence ID" value="ABJ73527.1"/>
    <property type="molecule type" value="Genomic_DNA"/>
</dbReference>
<dbReference type="RefSeq" id="WP_011676867.1">
    <property type="nucleotide sequence ID" value="NC_008527.1"/>
</dbReference>
<dbReference type="SMR" id="Q02WZ5"/>
<dbReference type="KEGG" id="llc:LACR_2047"/>
<dbReference type="HOGENOM" id="CLU_004217_2_2_9"/>
<dbReference type="Proteomes" id="UP000000240">
    <property type="component" value="Chromosome"/>
</dbReference>
<dbReference type="GO" id="GO:0005829">
    <property type="term" value="C:cytosol"/>
    <property type="evidence" value="ECO:0007669"/>
    <property type="project" value="TreeGrafter"/>
</dbReference>
<dbReference type="GO" id="GO:0000175">
    <property type="term" value="F:3'-5'-RNA exonuclease activity"/>
    <property type="evidence" value="ECO:0007669"/>
    <property type="project" value="TreeGrafter"/>
</dbReference>
<dbReference type="GO" id="GO:0000287">
    <property type="term" value="F:magnesium ion binding"/>
    <property type="evidence" value="ECO:0007669"/>
    <property type="project" value="UniProtKB-UniRule"/>
</dbReference>
<dbReference type="GO" id="GO:0004654">
    <property type="term" value="F:polyribonucleotide nucleotidyltransferase activity"/>
    <property type="evidence" value="ECO:0007669"/>
    <property type="project" value="UniProtKB-UniRule"/>
</dbReference>
<dbReference type="GO" id="GO:0003723">
    <property type="term" value="F:RNA binding"/>
    <property type="evidence" value="ECO:0007669"/>
    <property type="project" value="UniProtKB-UniRule"/>
</dbReference>
<dbReference type="GO" id="GO:0006402">
    <property type="term" value="P:mRNA catabolic process"/>
    <property type="evidence" value="ECO:0007669"/>
    <property type="project" value="UniProtKB-UniRule"/>
</dbReference>
<dbReference type="GO" id="GO:0006396">
    <property type="term" value="P:RNA processing"/>
    <property type="evidence" value="ECO:0007669"/>
    <property type="project" value="InterPro"/>
</dbReference>
<dbReference type="CDD" id="cd02393">
    <property type="entry name" value="KH-I_PNPase"/>
    <property type="match status" value="1"/>
</dbReference>
<dbReference type="CDD" id="cd11363">
    <property type="entry name" value="RNase_PH_PNPase_1"/>
    <property type="match status" value="1"/>
</dbReference>
<dbReference type="CDD" id="cd11364">
    <property type="entry name" value="RNase_PH_PNPase_2"/>
    <property type="match status" value="1"/>
</dbReference>
<dbReference type="FunFam" id="3.30.1370.10:FF:000001">
    <property type="entry name" value="Polyribonucleotide nucleotidyltransferase"/>
    <property type="match status" value="1"/>
</dbReference>
<dbReference type="FunFam" id="3.30.230.70:FF:000001">
    <property type="entry name" value="Polyribonucleotide nucleotidyltransferase"/>
    <property type="match status" value="1"/>
</dbReference>
<dbReference type="FunFam" id="3.30.230.70:FF:000002">
    <property type="entry name" value="Polyribonucleotide nucleotidyltransferase"/>
    <property type="match status" value="1"/>
</dbReference>
<dbReference type="Gene3D" id="3.30.230.70">
    <property type="entry name" value="GHMP Kinase, N-terminal domain"/>
    <property type="match status" value="2"/>
</dbReference>
<dbReference type="Gene3D" id="3.30.1370.10">
    <property type="entry name" value="K Homology domain, type 1"/>
    <property type="match status" value="1"/>
</dbReference>
<dbReference type="Gene3D" id="2.40.50.140">
    <property type="entry name" value="Nucleic acid-binding proteins"/>
    <property type="match status" value="1"/>
</dbReference>
<dbReference type="HAMAP" id="MF_01595">
    <property type="entry name" value="PNPase"/>
    <property type="match status" value="1"/>
</dbReference>
<dbReference type="InterPro" id="IPR001247">
    <property type="entry name" value="ExoRNase_PH_dom1"/>
</dbReference>
<dbReference type="InterPro" id="IPR015847">
    <property type="entry name" value="ExoRNase_PH_dom2"/>
</dbReference>
<dbReference type="InterPro" id="IPR036345">
    <property type="entry name" value="ExoRNase_PH_dom2_sf"/>
</dbReference>
<dbReference type="InterPro" id="IPR004087">
    <property type="entry name" value="KH_dom"/>
</dbReference>
<dbReference type="InterPro" id="IPR004088">
    <property type="entry name" value="KH_dom_type_1"/>
</dbReference>
<dbReference type="InterPro" id="IPR036612">
    <property type="entry name" value="KH_dom_type_1_sf"/>
</dbReference>
<dbReference type="InterPro" id="IPR012340">
    <property type="entry name" value="NA-bd_OB-fold"/>
</dbReference>
<dbReference type="InterPro" id="IPR012162">
    <property type="entry name" value="PNPase"/>
</dbReference>
<dbReference type="InterPro" id="IPR027408">
    <property type="entry name" value="PNPase/RNase_PH_dom_sf"/>
</dbReference>
<dbReference type="InterPro" id="IPR015848">
    <property type="entry name" value="PNPase_PH_RNA-bd_bac/org-type"/>
</dbReference>
<dbReference type="InterPro" id="IPR036456">
    <property type="entry name" value="PNPase_PH_RNA-bd_sf"/>
</dbReference>
<dbReference type="InterPro" id="IPR020568">
    <property type="entry name" value="Ribosomal_Su5_D2-typ_SF"/>
</dbReference>
<dbReference type="InterPro" id="IPR003029">
    <property type="entry name" value="S1_domain"/>
</dbReference>
<dbReference type="NCBIfam" id="TIGR03591">
    <property type="entry name" value="polynuc_phos"/>
    <property type="match status" value="1"/>
</dbReference>
<dbReference type="NCBIfam" id="NF008805">
    <property type="entry name" value="PRK11824.1"/>
    <property type="match status" value="1"/>
</dbReference>
<dbReference type="PANTHER" id="PTHR11252">
    <property type="entry name" value="POLYRIBONUCLEOTIDE NUCLEOTIDYLTRANSFERASE"/>
    <property type="match status" value="1"/>
</dbReference>
<dbReference type="PANTHER" id="PTHR11252:SF0">
    <property type="entry name" value="POLYRIBONUCLEOTIDE NUCLEOTIDYLTRANSFERASE 1, MITOCHONDRIAL"/>
    <property type="match status" value="1"/>
</dbReference>
<dbReference type="Pfam" id="PF00013">
    <property type="entry name" value="KH_1"/>
    <property type="match status" value="1"/>
</dbReference>
<dbReference type="Pfam" id="PF03726">
    <property type="entry name" value="PNPase"/>
    <property type="match status" value="1"/>
</dbReference>
<dbReference type="Pfam" id="PF01138">
    <property type="entry name" value="RNase_PH"/>
    <property type="match status" value="2"/>
</dbReference>
<dbReference type="Pfam" id="PF03725">
    <property type="entry name" value="RNase_PH_C"/>
    <property type="match status" value="2"/>
</dbReference>
<dbReference type="Pfam" id="PF00575">
    <property type="entry name" value="S1"/>
    <property type="match status" value="1"/>
</dbReference>
<dbReference type="PIRSF" id="PIRSF005499">
    <property type="entry name" value="PNPase"/>
    <property type="match status" value="1"/>
</dbReference>
<dbReference type="SMART" id="SM00322">
    <property type="entry name" value="KH"/>
    <property type="match status" value="1"/>
</dbReference>
<dbReference type="SMART" id="SM00316">
    <property type="entry name" value="S1"/>
    <property type="match status" value="1"/>
</dbReference>
<dbReference type="SUPFAM" id="SSF54791">
    <property type="entry name" value="Eukaryotic type KH-domain (KH-domain type I)"/>
    <property type="match status" value="1"/>
</dbReference>
<dbReference type="SUPFAM" id="SSF50249">
    <property type="entry name" value="Nucleic acid-binding proteins"/>
    <property type="match status" value="1"/>
</dbReference>
<dbReference type="SUPFAM" id="SSF46915">
    <property type="entry name" value="Polynucleotide phosphorylase/guanosine pentaphosphate synthase (PNPase/GPSI), domain 3"/>
    <property type="match status" value="1"/>
</dbReference>
<dbReference type="SUPFAM" id="SSF55666">
    <property type="entry name" value="Ribonuclease PH domain 2-like"/>
    <property type="match status" value="2"/>
</dbReference>
<dbReference type="SUPFAM" id="SSF54211">
    <property type="entry name" value="Ribosomal protein S5 domain 2-like"/>
    <property type="match status" value="2"/>
</dbReference>
<dbReference type="PROSITE" id="PS50084">
    <property type="entry name" value="KH_TYPE_1"/>
    <property type="match status" value="1"/>
</dbReference>
<dbReference type="PROSITE" id="PS50126">
    <property type="entry name" value="S1"/>
    <property type="match status" value="1"/>
</dbReference>
<feature type="chain" id="PRO_0000329689" description="Polyribonucleotide nucleotidyltransferase">
    <location>
        <begin position="1"/>
        <end position="769"/>
    </location>
</feature>
<feature type="domain" description="KH" evidence="1">
    <location>
        <begin position="557"/>
        <end position="616"/>
    </location>
</feature>
<feature type="domain" description="S1 motif" evidence="1">
    <location>
        <begin position="626"/>
        <end position="694"/>
    </location>
</feature>
<feature type="region of interest" description="Disordered" evidence="2">
    <location>
        <begin position="700"/>
        <end position="769"/>
    </location>
</feature>
<feature type="compositionally biased region" description="Basic and acidic residues" evidence="2">
    <location>
        <begin position="700"/>
        <end position="734"/>
    </location>
</feature>
<feature type="compositionally biased region" description="Low complexity" evidence="2">
    <location>
        <begin position="736"/>
        <end position="746"/>
    </location>
</feature>
<feature type="compositionally biased region" description="Basic and acidic residues" evidence="2">
    <location>
        <begin position="747"/>
        <end position="769"/>
    </location>
</feature>
<feature type="binding site" evidence="1">
    <location>
        <position position="490"/>
    </location>
    <ligand>
        <name>Mg(2+)</name>
        <dbReference type="ChEBI" id="CHEBI:18420"/>
    </ligand>
</feature>
<feature type="binding site" evidence="1">
    <location>
        <position position="496"/>
    </location>
    <ligand>
        <name>Mg(2+)</name>
        <dbReference type="ChEBI" id="CHEBI:18420"/>
    </ligand>
</feature>
<protein>
    <recommendedName>
        <fullName evidence="1">Polyribonucleotide nucleotidyltransferase</fullName>
        <ecNumber evidence="1">2.7.7.8</ecNumber>
    </recommendedName>
    <alternativeName>
        <fullName evidence="1">Polynucleotide phosphorylase</fullName>
        <shortName evidence="1">PNPase</shortName>
    </alternativeName>
</protein>
<gene>
    <name evidence="1" type="primary">pnp</name>
    <name type="ordered locus">LACR_2047</name>
</gene>
<reference key="1">
    <citation type="journal article" date="2006" name="Proc. Natl. Acad. Sci. U.S.A.">
        <title>Comparative genomics of the lactic acid bacteria.</title>
        <authorList>
            <person name="Makarova K.S."/>
            <person name="Slesarev A."/>
            <person name="Wolf Y.I."/>
            <person name="Sorokin A."/>
            <person name="Mirkin B."/>
            <person name="Koonin E.V."/>
            <person name="Pavlov A."/>
            <person name="Pavlova N."/>
            <person name="Karamychev V."/>
            <person name="Polouchine N."/>
            <person name="Shakhova V."/>
            <person name="Grigoriev I."/>
            <person name="Lou Y."/>
            <person name="Rohksar D."/>
            <person name="Lucas S."/>
            <person name="Huang K."/>
            <person name="Goodstein D.M."/>
            <person name="Hawkins T."/>
            <person name="Plengvidhya V."/>
            <person name="Welker D."/>
            <person name="Hughes J."/>
            <person name="Goh Y."/>
            <person name="Benson A."/>
            <person name="Baldwin K."/>
            <person name="Lee J.-H."/>
            <person name="Diaz-Muniz I."/>
            <person name="Dosti B."/>
            <person name="Smeianov V."/>
            <person name="Wechter W."/>
            <person name="Barabote R."/>
            <person name="Lorca G."/>
            <person name="Altermann E."/>
            <person name="Barrangou R."/>
            <person name="Ganesan B."/>
            <person name="Xie Y."/>
            <person name="Rawsthorne H."/>
            <person name="Tamir D."/>
            <person name="Parker C."/>
            <person name="Breidt F."/>
            <person name="Broadbent J.R."/>
            <person name="Hutkins R."/>
            <person name="O'Sullivan D."/>
            <person name="Steele J."/>
            <person name="Unlu G."/>
            <person name="Saier M.H. Jr."/>
            <person name="Klaenhammer T."/>
            <person name="Richardson P."/>
            <person name="Kozyavkin S."/>
            <person name="Weimer B.C."/>
            <person name="Mills D.A."/>
        </authorList>
    </citation>
    <scope>NUCLEOTIDE SEQUENCE [LARGE SCALE GENOMIC DNA]</scope>
    <source>
        <strain>SK11</strain>
    </source>
</reference>
<accession>Q02WZ5</accession>
<comment type="function">
    <text evidence="1">Involved in mRNA degradation. Catalyzes the phosphorolysis of single-stranded polyribonucleotides processively in the 3'- to 5'-direction.</text>
</comment>
<comment type="catalytic activity">
    <reaction evidence="1">
        <text>RNA(n+1) + phosphate = RNA(n) + a ribonucleoside 5'-diphosphate</text>
        <dbReference type="Rhea" id="RHEA:22096"/>
        <dbReference type="Rhea" id="RHEA-COMP:14527"/>
        <dbReference type="Rhea" id="RHEA-COMP:17342"/>
        <dbReference type="ChEBI" id="CHEBI:43474"/>
        <dbReference type="ChEBI" id="CHEBI:57930"/>
        <dbReference type="ChEBI" id="CHEBI:140395"/>
        <dbReference type="EC" id="2.7.7.8"/>
    </reaction>
</comment>
<comment type="cofactor">
    <cofactor evidence="1">
        <name>Mg(2+)</name>
        <dbReference type="ChEBI" id="CHEBI:18420"/>
    </cofactor>
</comment>
<comment type="subcellular location">
    <subcellularLocation>
        <location evidence="1">Cytoplasm</location>
    </subcellularLocation>
</comment>
<comment type="similarity">
    <text evidence="1">Belongs to the polyribonucleotide nucleotidyltransferase family.</text>
</comment>
<sequence>MAKETFSIEFAGRTLTVETGQVAKQANGAVVVRYGDTTVLTAATMGKMATGDFFPLQVNYEEKMYAAGKFPGGFNKREARPSTDATLTARLIDRPIRPMFAEGFRNEVQVINTVLSYDENASGRVAAMFGSSLALAISDIPFDGPIAGVEVAYIDGKYVINPTVAEKESSSLELSVAGNINAINMVESGAKELSEEVMLGALLAGHNAVKELIEFQNEIVAKVGKEKAEVELLHVDEDLKAEVIAAYNSDLQKAVQVEEKLAREAATKAVKEAIISVYSAKYENDENLSIILRDLAEILEGMEHAEVRRLITEDKIRPDGRKIDEIRPLDAEIDFTPRSITHGTGLFTRGQTQALSTLTLAPMNEAQIIDGLNDEYKKRFMHHYNFPQYSVGETGRYGAPGRREIGHGALGERALEQVLPSLEEFPYAIRLVAEVLESNGSSSQASICAGTLALMAGGVPIKAPVAGIAMGLISDGTNYTVLTDIQGLEDHFGDMDFKVAGTREGITALQMDIKISGITPEILAEALAQAKTARFQILDVIEATIAQPREELAPSAPKIDTIMIPVDKIKVVIGKGGEQIDKIIAETGVKIDIDDEGLCSIFSSDQSAIDRAKEIIAELVREAKVGEVYEAKVVRIESFGAFVNLFGKQDAMVHISEMAWARTAKVEDVMKLGDVVKVKIMKIDDKGRVDASMRALVEKPEGYVEPERKPRERRDNKDRRNGNGFDRRNNDRNNHNNHNNNSGNHSFELRERKSHVDHEFPELSTKKPE</sequence>
<keyword id="KW-0963">Cytoplasm</keyword>
<keyword id="KW-0460">Magnesium</keyword>
<keyword id="KW-0479">Metal-binding</keyword>
<keyword id="KW-0548">Nucleotidyltransferase</keyword>
<keyword id="KW-0694">RNA-binding</keyword>
<keyword id="KW-0808">Transferase</keyword>
<organism>
    <name type="scientific">Lactococcus lactis subsp. cremoris (strain SK11)</name>
    <dbReference type="NCBI Taxonomy" id="272622"/>
    <lineage>
        <taxon>Bacteria</taxon>
        <taxon>Bacillati</taxon>
        <taxon>Bacillota</taxon>
        <taxon>Bacilli</taxon>
        <taxon>Lactobacillales</taxon>
        <taxon>Streptococcaceae</taxon>
        <taxon>Lactococcus</taxon>
        <taxon>Lactococcus cremoris subsp. cremoris</taxon>
    </lineage>
</organism>
<name>PNP_LACLS</name>